<dbReference type="EC" id="3.6.1.23"/>
<dbReference type="EMBL" id="X94355">
    <property type="protein sequence ID" value="CAA64116.1"/>
    <property type="molecule type" value="Genomic_DNA"/>
</dbReference>
<dbReference type="SMR" id="P87630"/>
<dbReference type="Proteomes" id="UP000137384">
    <property type="component" value="Segment"/>
</dbReference>
<dbReference type="GO" id="GO:0004170">
    <property type="term" value="F:dUTP diphosphatase activity"/>
    <property type="evidence" value="ECO:0007669"/>
    <property type="project" value="UniProtKB-EC"/>
</dbReference>
<dbReference type="GO" id="GO:0000287">
    <property type="term" value="F:magnesium ion binding"/>
    <property type="evidence" value="ECO:0007669"/>
    <property type="project" value="InterPro"/>
</dbReference>
<dbReference type="GO" id="GO:0006226">
    <property type="term" value="P:dUMP biosynthetic process"/>
    <property type="evidence" value="ECO:0007669"/>
    <property type="project" value="InterPro"/>
</dbReference>
<dbReference type="GO" id="GO:0046081">
    <property type="term" value="P:dUTP catabolic process"/>
    <property type="evidence" value="ECO:0007669"/>
    <property type="project" value="InterPro"/>
</dbReference>
<dbReference type="CDD" id="cd07557">
    <property type="entry name" value="trimeric_dUTPase"/>
    <property type="match status" value="1"/>
</dbReference>
<dbReference type="Gene3D" id="2.70.40.10">
    <property type="match status" value="1"/>
</dbReference>
<dbReference type="InterPro" id="IPR008181">
    <property type="entry name" value="dUTPase"/>
</dbReference>
<dbReference type="InterPro" id="IPR029054">
    <property type="entry name" value="dUTPase-like"/>
</dbReference>
<dbReference type="InterPro" id="IPR036157">
    <property type="entry name" value="dUTPase-like_sf"/>
</dbReference>
<dbReference type="InterPro" id="IPR033704">
    <property type="entry name" value="dUTPase_trimeric"/>
</dbReference>
<dbReference type="NCBIfam" id="TIGR00576">
    <property type="entry name" value="dut"/>
    <property type="match status" value="1"/>
</dbReference>
<dbReference type="NCBIfam" id="NF001862">
    <property type="entry name" value="PRK00601.1"/>
    <property type="match status" value="1"/>
</dbReference>
<dbReference type="PANTHER" id="PTHR11241">
    <property type="entry name" value="DEOXYURIDINE 5'-TRIPHOSPHATE NUCLEOTIDOHYDROLASE"/>
    <property type="match status" value="1"/>
</dbReference>
<dbReference type="PANTHER" id="PTHR11241:SF0">
    <property type="entry name" value="DEOXYURIDINE 5'-TRIPHOSPHATE NUCLEOTIDOHYDROLASE"/>
    <property type="match status" value="1"/>
</dbReference>
<dbReference type="Pfam" id="PF00692">
    <property type="entry name" value="dUTPase"/>
    <property type="match status" value="1"/>
</dbReference>
<dbReference type="SUPFAM" id="SSF51283">
    <property type="entry name" value="dUTPase-like"/>
    <property type="match status" value="1"/>
</dbReference>
<sequence>MFNMNINSPVRFVKETNRAKSPTRQSPGAAGYDLYSAYDYTIPPGERQLIKTDISMSMPKFCYGRIAPRSGLSLKGIDIGGGVIDEDYRGNIGVILINNGKCTFNVNTGDRIAQLIYQRIYYPELEEVQSLDSTDRGAQGFGSTGLR</sequence>
<accession>P87630</accession>
<reference key="1">
    <citation type="submission" date="2003-03" db="EMBL/GenBank/DDBJ databases">
        <title>Structure-function and organization of cowpox virus strain GRI-90 complete genome.</title>
        <authorList>
            <person name="Shchelkunov S.N."/>
            <person name="Safronov P.F."/>
            <person name="Totmenin A.V."/>
            <person name="Miheev M.V."/>
            <person name="Ryazankina O.I."/>
            <person name="Petrov N.A."/>
            <person name="Gutorov V.V."/>
            <person name="Kotwal G.J."/>
            <person name="Sandakhchiev L.S."/>
        </authorList>
    </citation>
    <scope>NUCLEOTIDE SEQUENCE [LARGE SCALE GENOMIC DNA]</scope>
</reference>
<name>DUT_CWPXG</name>
<comment type="function">
    <text evidence="2">This enzyme is involved in nucleotide metabolism: it produces dUMP, the immediate precursor of thymidine nucleotides and it decreases the intracellular concentration of dUTP so that uracil cannot be incorporated into DNA.</text>
</comment>
<comment type="catalytic activity">
    <reaction evidence="2">
        <text>dUTP + H2O = dUMP + diphosphate + H(+)</text>
        <dbReference type="Rhea" id="RHEA:10248"/>
        <dbReference type="ChEBI" id="CHEBI:15377"/>
        <dbReference type="ChEBI" id="CHEBI:15378"/>
        <dbReference type="ChEBI" id="CHEBI:33019"/>
        <dbReference type="ChEBI" id="CHEBI:61555"/>
        <dbReference type="ChEBI" id="CHEBI:246422"/>
        <dbReference type="EC" id="3.6.1.23"/>
    </reaction>
    <physiologicalReaction direction="left-to-right" evidence="2">
        <dbReference type="Rhea" id="RHEA:10249"/>
    </physiologicalReaction>
</comment>
<comment type="cofactor">
    <cofactor evidence="1">
        <name>Mg(2+)</name>
        <dbReference type="ChEBI" id="CHEBI:18420"/>
    </cofactor>
</comment>
<comment type="induction">
    <text evidence="2">Expressed in the early phase of the viral replicative cycle.</text>
</comment>
<comment type="similarity">
    <text evidence="3">Belongs to the dUTPase family.</text>
</comment>
<protein>
    <recommendedName>
        <fullName>Deoxyuridine 5'-triphosphate nucleotidohydrolase</fullName>
        <shortName>dUTPase</shortName>
        <ecNumber>3.6.1.23</ecNumber>
    </recommendedName>
    <alternativeName>
        <fullName>dUTP pyrophosphatase</fullName>
    </alternativeName>
</protein>
<gene>
    <name type="primary">OPG046</name>
    <name type="synonym">DUT</name>
    <name type="synonym">G2L</name>
</gene>
<organismHost>
    <name type="scientific">Bos taurus</name>
    <name type="common">Bovine</name>
    <dbReference type="NCBI Taxonomy" id="9913"/>
</organismHost>
<organismHost>
    <name type="scientific">Felis catus</name>
    <name type="common">Cat</name>
    <name type="synonym">Felis silvestris catus</name>
    <dbReference type="NCBI Taxonomy" id="9685"/>
</organismHost>
<organismHost>
    <name type="scientific">Homo sapiens</name>
    <name type="common">Human</name>
    <dbReference type="NCBI Taxonomy" id="9606"/>
</organismHost>
<organismHost>
    <name type="scientific">Loxodonta africana</name>
    <name type="common">African elephant</name>
    <dbReference type="NCBI Taxonomy" id="9785"/>
</organismHost>
<organismHost>
    <name type="scientific">Microtus agrestis</name>
    <name type="common">Short-tailed field vole</name>
    <dbReference type="NCBI Taxonomy" id="29092"/>
</organismHost>
<organismHost>
    <name type="scientific">Mus musculus</name>
    <name type="common">Mouse</name>
    <dbReference type="NCBI Taxonomy" id="10090"/>
</organismHost>
<organismHost>
    <name type="scientific">Myodes glareolus</name>
    <name type="common">Bank vole</name>
    <name type="synonym">Clethrionomys glareolus</name>
    <dbReference type="NCBI Taxonomy" id="447135"/>
</organismHost>
<organism>
    <name type="scientific">Cowpox virus (strain GRI-90 / Grishak)</name>
    <name type="common">CPV</name>
    <dbReference type="NCBI Taxonomy" id="265871"/>
    <lineage>
        <taxon>Viruses</taxon>
        <taxon>Varidnaviria</taxon>
        <taxon>Bamfordvirae</taxon>
        <taxon>Nucleocytoviricota</taxon>
        <taxon>Pokkesviricetes</taxon>
        <taxon>Chitovirales</taxon>
        <taxon>Poxviridae</taxon>
        <taxon>Chordopoxvirinae</taxon>
        <taxon>Orthopoxvirus</taxon>
        <taxon>Cowpox virus</taxon>
    </lineage>
</organism>
<feature type="chain" id="PRO_0000182946" description="Deoxyuridine 5'-triphosphate nucleotidohydrolase">
    <location>
        <begin position="1"/>
        <end position="147"/>
    </location>
</feature>
<feature type="binding site" evidence="2">
    <location>
        <position position="24"/>
    </location>
    <ligand>
        <name>Mg(2+)</name>
        <dbReference type="ChEBI" id="CHEBI:18420"/>
    </ligand>
</feature>
<feature type="binding site" evidence="2">
    <location>
        <begin position="68"/>
        <end position="70"/>
    </location>
    <ligand>
        <name>dUTP</name>
        <dbReference type="ChEBI" id="CHEBI:61555"/>
    </ligand>
</feature>
<feature type="binding site" evidence="2">
    <location>
        <begin position="82"/>
        <end position="85"/>
    </location>
    <ligand>
        <name>dUTP</name>
        <dbReference type="ChEBI" id="CHEBI:61555"/>
    </ligand>
</feature>
<feature type="binding site" evidence="2">
    <location>
        <position position="88"/>
    </location>
    <ligand>
        <name>dUTP</name>
        <dbReference type="ChEBI" id="CHEBI:61555"/>
    </ligand>
</feature>
<feature type="binding site" evidence="2">
    <location>
        <position position="93"/>
    </location>
    <ligand>
        <name>dUTP</name>
        <dbReference type="ChEBI" id="CHEBI:61555"/>
    </ligand>
</feature>
<feature type="binding site" evidence="2">
    <location>
        <position position="95"/>
    </location>
    <ligand>
        <name>dUTP</name>
        <dbReference type="ChEBI" id="CHEBI:61555"/>
    </ligand>
</feature>
<feature type="binding site" evidence="2">
    <location>
        <position position="111"/>
    </location>
    <ligand>
        <name>dUTP</name>
        <dbReference type="ChEBI" id="CHEBI:61555"/>
    </ligand>
</feature>
<keyword id="KW-0244">Early protein</keyword>
<keyword id="KW-0378">Hydrolase</keyword>
<keyword id="KW-0460">Magnesium</keyword>
<keyword id="KW-0479">Metal-binding</keyword>
<keyword id="KW-0546">Nucleotide metabolism</keyword>
<proteinExistence type="inferred from homology"/>
<evidence type="ECO:0000250" key="1"/>
<evidence type="ECO:0000250" key="2">
    <source>
        <dbReference type="UniProtKB" id="P17374"/>
    </source>
</evidence>
<evidence type="ECO:0000305" key="3"/>